<reference key="1">
    <citation type="journal article" date="2008" name="BMC Genomics">
        <title>The missing link: Bordetella petrii is endowed with both the metabolic versatility of environmental bacteria and virulence traits of pathogenic Bordetellae.</title>
        <authorList>
            <person name="Gross R."/>
            <person name="Guzman C.A."/>
            <person name="Sebaihia M."/>
            <person name="Martin dos Santos V.A.P."/>
            <person name="Pieper D.H."/>
            <person name="Koebnik R."/>
            <person name="Lechner M."/>
            <person name="Bartels D."/>
            <person name="Buhrmester J."/>
            <person name="Choudhuri J.V."/>
            <person name="Ebensen T."/>
            <person name="Gaigalat L."/>
            <person name="Herrmann S."/>
            <person name="Khachane A.N."/>
            <person name="Larisch C."/>
            <person name="Link S."/>
            <person name="Linke B."/>
            <person name="Meyer F."/>
            <person name="Mormann S."/>
            <person name="Nakunst D."/>
            <person name="Rueckert C."/>
            <person name="Schneiker-Bekel S."/>
            <person name="Schulze K."/>
            <person name="Voerholter F.-J."/>
            <person name="Yevsa T."/>
            <person name="Engle J.T."/>
            <person name="Goldman W.E."/>
            <person name="Puehler A."/>
            <person name="Goebel U.B."/>
            <person name="Goesmann A."/>
            <person name="Bloecker H."/>
            <person name="Kaiser O."/>
            <person name="Martinez-Arias R."/>
        </authorList>
    </citation>
    <scope>NUCLEOTIDE SEQUENCE [LARGE SCALE GENOMIC DNA]</scope>
    <source>
        <strain>ATCC BAA-461 / DSM 12804 / CCUG 43448</strain>
    </source>
</reference>
<feature type="chain" id="PRO_0000336816" description="UDP-N-acetylmuramate--L-alanine ligase">
    <location>
        <begin position="1"/>
        <end position="468"/>
    </location>
</feature>
<feature type="binding site" evidence="1">
    <location>
        <begin position="112"/>
        <end position="118"/>
    </location>
    <ligand>
        <name>ATP</name>
        <dbReference type="ChEBI" id="CHEBI:30616"/>
    </ligand>
</feature>
<organism>
    <name type="scientific">Bordetella petrii (strain ATCC BAA-461 / DSM 12804 / CCUG 43448)</name>
    <dbReference type="NCBI Taxonomy" id="340100"/>
    <lineage>
        <taxon>Bacteria</taxon>
        <taxon>Pseudomonadati</taxon>
        <taxon>Pseudomonadota</taxon>
        <taxon>Betaproteobacteria</taxon>
        <taxon>Burkholderiales</taxon>
        <taxon>Alcaligenaceae</taxon>
        <taxon>Bordetella</taxon>
    </lineage>
</organism>
<comment type="function">
    <text evidence="1">Cell wall formation.</text>
</comment>
<comment type="catalytic activity">
    <reaction evidence="1">
        <text>UDP-N-acetyl-alpha-D-muramate + L-alanine + ATP = UDP-N-acetyl-alpha-D-muramoyl-L-alanine + ADP + phosphate + H(+)</text>
        <dbReference type="Rhea" id="RHEA:23372"/>
        <dbReference type="ChEBI" id="CHEBI:15378"/>
        <dbReference type="ChEBI" id="CHEBI:30616"/>
        <dbReference type="ChEBI" id="CHEBI:43474"/>
        <dbReference type="ChEBI" id="CHEBI:57972"/>
        <dbReference type="ChEBI" id="CHEBI:70757"/>
        <dbReference type="ChEBI" id="CHEBI:83898"/>
        <dbReference type="ChEBI" id="CHEBI:456216"/>
        <dbReference type="EC" id="6.3.2.8"/>
    </reaction>
</comment>
<comment type="pathway">
    <text evidence="1">Cell wall biogenesis; peptidoglycan biosynthesis.</text>
</comment>
<comment type="subcellular location">
    <subcellularLocation>
        <location evidence="1">Cytoplasm</location>
    </subcellularLocation>
</comment>
<comment type="similarity">
    <text evidence="1">Belongs to the MurCDEF family.</text>
</comment>
<dbReference type="EC" id="6.3.2.8" evidence="1"/>
<dbReference type="EMBL" id="AM902716">
    <property type="protein sequence ID" value="CAP41030.1"/>
    <property type="molecule type" value="Genomic_DNA"/>
</dbReference>
<dbReference type="SMR" id="A9I4V6"/>
<dbReference type="STRING" id="94624.Bpet0698"/>
<dbReference type="KEGG" id="bpt:Bpet0698"/>
<dbReference type="eggNOG" id="COG0773">
    <property type="taxonomic scope" value="Bacteria"/>
</dbReference>
<dbReference type="UniPathway" id="UPA00219"/>
<dbReference type="Proteomes" id="UP000001225">
    <property type="component" value="Chromosome"/>
</dbReference>
<dbReference type="GO" id="GO:0005737">
    <property type="term" value="C:cytoplasm"/>
    <property type="evidence" value="ECO:0007669"/>
    <property type="project" value="UniProtKB-SubCell"/>
</dbReference>
<dbReference type="GO" id="GO:0005524">
    <property type="term" value="F:ATP binding"/>
    <property type="evidence" value="ECO:0007669"/>
    <property type="project" value="UniProtKB-UniRule"/>
</dbReference>
<dbReference type="GO" id="GO:0008763">
    <property type="term" value="F:UDP-N-acetylmuramate-L-alanine ligase activity"/>
    <property type="evidence" value="ECO:0007669"/>
    <property type="project" value="UniProtKB-UniRule"/>
</dbReference>
<dbReference type="GO" id="GO:0051301">
    <property type="term" value="P:cell division"/>
    <property type="evidence" value="ECO:0007669"/>
    <property type="project" value="UniProtKB-KW"/>
</dbReference>
<dbReference type="GO" id="GO:0071555">
    <property type="term" value="P:cell wall organization"/>
    <property type="evidence" value="ECO:0007669"/>
    <property type="project" value="UniProtKB-KW"/>
</dbReference>
<dbReference type="GO" id="GO:0009252">
    <property type="term" value="P:peptidoglycan biosynthetic process"/>
    <property type="evidence" value="ECO:0007669"/>
    <property type="project" value="UniProtKB-UniRule"/>
</dbReference>
<dbReference type="GO" id="GO:0008360">
    <property type="term" value="P:regulation of cell shape"/>
    <property type="evidence" value="ECO:0007669"/>
    <property type="project" value="UniProtKB-KW"/>
</dbReference>
<dbReference type="FunFam" id="3.40.1190.10:FF:000001">
    <property type="entry name" value="UDP-N-acetylmuramate--L-alanine ligase"/>
    <property type="match status" value="1"/>
</dbReference>
<dbReference type="Gene3D" id="3.90.190.20">
    <property type="entry name" value="Mur ligase, C-terminal domain"/>
    <property type="match status" value="1"/>
</dbReference>
<dbReference type="Gene3D" id="3.40.1190.10">
    <property type="entry name" value="Mur-like, catalytic domain"/>
    <property type="match status" value="1"/>
</dbReference>
<dbReference type="Gene3D" id="3.40.50.720">
    <property type="entry name" value="NAD(P)-binding Rossmann-like Domain"/>
    <property type="match status" value="1"/>
</dbReference>
<dbReference type="HAMAP" id="MF_00046">
    <property type="entry name" value="MurC"/>
    <property type="match status" value="1"/>
</dbReference>
<dbReference type="InterPro" id="IPR036565">
    <property type="entry name" value="Mur-like_cat_sf"/>
</dbReference>
<dbReference type="InterPro" id="IPR004101">
    <property type="entry name" value="Mur_ligase_C"/>
</dbReference>
<dbReference type="InterPro" id="IPR036615">
    <property type="entry name" value="Mur_ligase_C_dom_sf"/>
</dbReference>
<dbReference type="InterPro" id="IPR013221">
    <property type="entry name" value="Mur_ligase_cen"/>
</dbReference>
<dbReference type="InterPro" id="IPR000713">
    <property type="entry name" value="Mur_ligase_N"/>
</dbReference>
<dbReference type="InterPro" id="IPR050061">
    <property type="entry name" value="MurCDEF_pg_biosynth"/>
</dbReference>
<dbReference type="InterPro" id="IPR005758">
    <property type="entry name" value="UDP-N-AcMur_Ala_ligase_MurC"/>
</dbReference>
<dbReference type="NCBIfam" id="TIGR01082">
    <property type="entry name" value="murC"/>
    <property type="match status" value="1"/>
</dbReference>
<dbReference type="PANTHER" id="PTHR43445:SF3">
    <property type="entry name" value="UDP-N-ACETYLMURAMATE--L-ALANINE LIGASE"/>
    <property type="match status" value="1"/>
</dbReference>
<dbReference type="PANTHER" id="PTHR43445">
    <property type="entry name" value="UDP-N-ACETYLMURAMATE--L-ALANINE LIGASE-RELATED"/>
    <property type="match status" value="1"/>
</dbReference>
<dbReference type="Pfam" id="PF01225">
    <property type="entry name" value="Mur_ligase"/>
    <property type="match status" value="1"/>
</dbReference>
<dbReference type="Pfam" id="PF02875">
    <property type="entry name" value="Mur_ligase_C"/>
    <property type="match status" value="1"/>
</dbReference>
<dbReference type="Pfam" id="PF08245">
    <property type="entry name" value="Mur_ligase_M"/>
    <property type="match status" value="1"/>
</dbReference>
<dbReference type="SUPFAM" id="SSF51984">
    <property type="entry name" value="MurCD N-terminal domain"/>
    <property type="match status" value="1"/>
</dbReference>
<dbReference type="SUPFAM" id="SSF53623">
    <property type="entry name" value="MurD-like peptide ligases, catalytic domain"/>
    <property type="match status" value="1"/>
</dbReference>
<dbReference type="SUPFAM" id="SSF53244">
    <property type="entry name" value="MurD-like peptide ligases, peptide-binding domain"/>
    <property type="match status" value="1"/>
</dbReference>
<sequence>MKHRIQHIHFVGIGGSGMSGIAEVLLNLGYTISGSDLQESAVTRRLAGLGAHVAIGHTAANVAGAGAIVTSTAVAGDNPEVIAARAAGIPVVPRAIMLAELMRLKRGIAVAGTHGKTTTTSLVASVLAAGDLDPTFVIGGRLTSAGANARLGQGEYIVVEADESDASFLNLLPVMAIVTNIDADHMDTYGHDVARLKSAFIEFTQRLPFYGSAVLCADDANVREIMPFVSRPITTYGLSPDAHVRGENVQADGTRMRFTVQRQDRATALPPLAIELNLPGLHNVRNALAAVAVATELGVPDEAIAQALASFKGVGRRFTQTGEFPVPAAHGGGTFTLIDDYGHHPVEMAATLAAARGAWPDRRIVLAFQPHRYTRTRDCFEDFVRVLGGADAVLLTEVYAAGEPPLVAADGRALARALRVAGRIEPVFVEDVADLPQAVLDFVRDGDVVVVMGAGSISKVPGLVGELA</sequence>
<protein>
    <recommendedName>
        <fullName evidence="1">UDP-N-acetylmuramate--L-alanine ligase</fullName>
        <ecNumber evidence="1">6.3.2.8</ecNumber>
    </recommendedName>
    <alternativeName>
        <fullName evidence="1">UDP-N-acetylmuramoyl-L-alanine synthetase</fullName>
    </alternativeName>
</protein>
<gene>
    <name evidence="1" type="primary">murC</name>
    <name type="ordered locus">Bpet0698</name>
</gene>
<keyword id="KW-0067">ATP-binding</keyword>
<keyword id="KW-0131">Cell cycle</keyword>
<keyword id="KW-0132">Cell division</keyword>
<keyword id="KW-0133">Cell shape</keyword>
<keyword id="KW-0961">Cell wall biogenesis/degradation</keyword>
<keyword id="KW-0963">Cytoplasm</keyword>
<keyword id="KW-0436">Ligase</keyword>
<keyword id="KW-0547">Nucleotide-binding</keyword>
<keyword id="KW-0573">Peptidoglycan synthesis</keyword>
<proteinExistence type="inferred from homology"/>
<name>MURC_BORPD</name>
<evidence type="ECO:0000255" key="1">
    <source>
        <dbReference type="HAMAP-Rule" id="MF_00046"/>
    </source>
</evidence>
<accession>A9I4V6</accession>